<proteinExistence type="inferred from homology"/>
<organism>
    <name type="scientific">Rhodospirillum centenum (strain ATCC 51521 / SW)</name>
    <dbReference type="NCBI Taxonomy" id="414684"/>
    <lineage>
        <taxon>Bacteria</taxon>
        <taxon>Pseudomonadati</taxon>
        <taxon>Pseudomonadota</taxon>
        <taxon>Alphaproteobacteria</taxon>
        <taxon>Rhodospirillales</taxon>
        <taxon>Rhodospirillaceae</taxon>
        <taxon>Rhodospirillum</taxon>
    </lineage>
</organism>
<keyword id="KW-0240">DNA-directed RNA polymerase</keyword>
<keyword id="KW-0548">Nucleotidyltransferase</keyword>
<keyword id="KW-1185">Reference proteome</keyword>
<keyword id="KW-0804">Transcription</keyword>
<keyword id="KW-0808">Transferase</keyword>
<sequence length="142" mass="15318">MARVTVEDCVEKVPNRFELVMMAAQRARDIAAGSPLSVDRDNDKNPVVALREIADETVTLETLRNSLIKGHQRVPEQDEPEEEIVELMAGENAWSVPEAGGDEGGDASELLDDEGEGAAAGAEPDFSEMDVPLADLADEDKI</sequence>
<feature type="chain" id="PRO_1000121262" description="DNA-directed RNA polymerase subunit omega">
    <location>
        <begin position="1"/>
        <end position="142"/>
    </location>
</feature>
<feature type="region of interest" description="Disordered" evidence="2">
    <location>
        <begin position="93"/>
        <end position="142"/>
    </location>
</feature>
<feature type="compositionally biased region" description="Acidic residues" evidence="2">
    <location>
        <begin position="100"/>
        <end position="116"/>
    </location>
</feature>
<name>RPOZ_RHOCS</name>
<gene>
    <name evidence="1" type="primary">rpoZ</name>
    <name type="ordered locus">RC1_1500</name>
</gene>
<dbReference type="EC" id="2.7.7.6" evidence="1"/>
<dbReference type="EMBL" id="CP000613">
    <property type="protein sequence ID" value="ACI98904.1"/>
    <property type="molecule type" value="Genomic_DNA"/>
</dbReference>
<dbReference type="RefSeq" id="WP_012566690.1">
    <property type="nucleotide sequence ID" value="NC_011420.2"/>
</dbReference>
<dbReference type="SMR" id="B6IN07"/>
<dbReference type="STRING" id="414684.RC1_1500"/>
<dbReference type="KEGG" id="rce:RC1_1500"/>
<dbReference type="eggNOG" id="COG1758">
    <property type="taxonomic scope" value="Bacteria"/>
</dbReference>
<dbReference type="HOGENOM" id="CLU_125406_2_0_5"/>
<dbReference type="OrthoDB" id="9796300at2"/>
<dbReference type="Proteomes" id="UP000001591">
    <property type="component" value="Chromosome"/>
</dbReference>
<dbReference type="GO" id="GO:0000428">
    <property type="term" value="C:DNA-directed RNA polymerase complex"/>
    <property type="evidence" value="ECO:0007669"/>
    <property type="project" value="UniProtKB-KW"/>
</dbReference>
<dbReference type="GO" id="GO:0003677">
    <property type="term" value="F:DNA binding"/>
    <property type="evidence" value="ECO:0007669"/>
    <property type="project" value="UniProtKB-UniRule"/>
</dbReference>
<dbReference type="GO" id="GO:0003899">
    <property type="term" value="F:DNA-directed RNA polymerase activity"/>
    <property type="evidence" value="ECO:0007669"/>
    <property type="project" value="UniProtKB-UniRule"/>
</dbReference>
<dbReference type="GO" id="GO:0006351">
    <property type="term" value="P:DNA-templated transcription"/>
    <property type="evidence" value="ECO:0007669"/>
    <property type="project" value="UniProtKB-UniRule"/>
</dbReference>
<dbReference type="Gene3D" id="3.90.940.10">
    <property type="match status" value="1"/>
</dbReference>
<dbReference type="HAMAP" id="MF_00366">
    <property type="entry name" value="RNApol_bact_RpoZ"/>
    <property type="match status" value="1"/>
</dbReference>
<dbReference type="InterPro" id="IPR003716">
    <property type="entry name" value="DNA-dir_RNA_pol_omega"/>
</dbReference>
<dbReference type="InterPro" id="IPR006110">
    <property type="entry name" value="Pol_omega/Rpo6/RPB6"/>
</dbReference>
<dbReference type="InterPro" id="IPR036161">
    <property type="entry name" value="RPB6/omega-like_sf"/>
</dbReference>
<dbReference type="NCBIfam" id="TIGR00690">
    <property type="entry name" value="rpoZ"/>
    <property type="match status" value="1"/>
</dbReference>
<dbReference type="PANTHER" id="PTHR34476">
    <property type="entry name" value="DNA-DIRECTED RNA POLYMERASE SUBUNIT OMEGA"/>
    <property type="match status" value="1"/>
</dbReference>
<dbReference type="PANTHER" id="PTHR34476:SF1">
    <property type="entry name" value="DNA-DIRECTED RNA POLYMERASE SUBUNIT OMEGA"/>
    <property type="match status" value="1"/>
</dbReference>
<dbReference type="Pfam" id="PF01192">
    <property type="entry name" value="RNA_pol_Rpb6"/>
    <property type="match status" value="1"/>
</dbReference>
<dbReference type="SMART" id="SM01409">
    <property type="entry name" value="RNA_pol_Rpb6"/>
    <property type="match status" value="1"/>
</dbReference>
<dbReference type="SUPFAM" id="SSF63562">
    <property type="entry name" value="RPB6/omega subunit-like"/>
    <property type="match status" value="1"/>
</dbReference>
<accession>B6IN07</accession>
<reference key="1">
    <citation type="submission" date="2007-03" db="EMBL/GenBank/DDBJ databases">
        <title>Genome sequence of Rhodospirillum centenum.</title>
        <authorList>
            <person name="Touchman J.W."/>
            <person name="Bauer C."/>
            <person name="Blankenship R.E."/>
        </authorList>
    </citation>
    <scope>NUCLEOTIDE SEQUENCE [LARGE SCALE GENOMIC DNA]</scope>
    <source>
        <strain>ATCC 51521 / SW</strain>
    </source>
</reference>
<comment type="function">
    <text evidence="1">Promotes RNA polymerase assembly. Latches the N- and C-terminal regions of the beta' subunit thereby facilitating its interaction with the beta and alpha subunits.</text>
</comment>
<comment type="catalytic activity">
    <reaction evidence="1">
        <text>RNA(n) + a ribonucleoside 5'-triphosphate = RNA(n+1) + diphosphate</text>
        <dbReference type="Rhea" id="RHEA:21248"/>
        <dbReference type="Rhea" id="RHEA-COMP:14527"/>
        <dbReference type="Rhea" id="RHEA-COMP:17342"/>
        <dbReference type="ChEBI" id="CHEBI:33019"/>
        <dbReference type="ChEBI" id="CHEBI:61557"/>
        <dbReference type="ChEBI" id="CHEBI:140395"/>
        <dbReference type="EC" id="2.7.7.6"/>
    </reaction>
</comment>
<comment type="subunit">
    <text evidence="1">The RNAP catalytic core consists of 2 alpha, 1 beta, 1 beta' and 1 omega subunit. When a sigma factor is associated with the core the holoenzyme is formed, which can initiate transcription.</text>
</comment>
<comment type="similarity">
    <text evidence="1">Belongs to the RNA polymerase subunit omega family.</text>
</comment>
<protein>
    <recommendedName>
        <fullName evidence="1">DNA-directed RNA polymerase subunit omega</fullName>
        <shortName evidence="1">RNAP omega subunit</shortName>
        <ecNumber evidence="1">2.7.7.6</ecNumber>
    </recommendedName>
    <alternativeName>
        <fullName evidence="1">RNA polymerase omega subunit</fullName>
    </alternativeName>
    <alternativeName>
        <fullName evidence="1">Transcriptase subunit omega</fullName>
    </alternativeName>
</protein>
<evidence type="ECO:0000255" key="1">
    <source>
        <dbReference type="HAMAP-Rule" id="MF_00366"/>
    </source>
</evidence>
<evidence type="ECO:0000256" key="2">
    <source>
        <dbReference type="SAM" id="MobiDB-lite"/>
    </source>
</evidence>